<evidence type="ECO:0000255" key="1">
    <source>
        <dbReference type="HAMAP-Rule" id="MF_00236"/>
    </source>
</evidence>
<organism>
    <name type="scientific">Bacillus anthracis (strain A0248)</name>
    <dbReference type="NCBI Taxonomy" id="592021"/>
    <lineage>
        <taxon>Bacteria</taxon>
        <taxon>Bacillati</taxon>
        <taxon>Bacillota</taxon>
        <taxon>Bacilli</taxon>
        <taxon>Bacillales</taxon>
        <taxon>Bacillaceae</taxon>
        <taxon>Bacillus</taxon>
        <taxon>Bacillus cereus group</taxon>
    </lineage>
</organism>
<gene>
    <name evidence="1" type="primary">tatA</name>
    <name type="ordered locus">BAA_2306</name>
</gene>
<comment type="function">
    <text evidence="1">Part of the twin-arginine translocation (Tat) system that transports large folded proteins containing a characteristic twin-arginine motif in their signal peptide across membranes. TatA could form the protein-conducting channel of the Tat system.</text>
</comment>
<comment type="subunit">
    <text evidence="1">Forms a complex with TatC.</text>
</comment>
<comment type="subcellular location">
    <subcellularLocation>
        <location evidence="1">Cell membrane</location>
        <topology evidence="1">Single-pass membrane protein</topology>
    </subcellularLocation>
</comment>
<comment type="similarity">
    <text evidence="1">Belongs to the TatA/E family.</text>
</comment>
<accession>C3P8W4</accession>
<proteinExistence type="inferred from homology"/>
<feature type="chain" id="PRO_1000125186" description="Sec-independent protein translocase protein TatA">
    <location>
        <begin position="1"/>
        <end position="61"/>
    </location>
</feature>
<feature type="transmembrane region" description="Helical" evidence="1">
    <location>
        <begin position="1"/>
        <end position="21"/>
    </location>
</feature>
<dbReference type="EMBL" id="CP001598">
    <property type="protein sequence ID" value="ACQ46894.1"/>
    <property type="molecule type" value="Genomic_DNA"/>
</dbReference>
<dbReference type="RefSeq" id="WP_000492443.1">
    <property type="nucleotide sequence ID" value="NC_012659.1"/>
</dbReference>
<dbReference type="SMR" id="C3P8W4"/>
<dbReference type="KEGG" id="bai:BAA_2306"/>
<dbReference type="HOGENOM" id="CLU_086034_6_0_9"/>
<dbReference type="GO" id="GO:0033281">
    <property type="term" value="C:TAT protein transport complex"/>
    <property type="evidence" value="ECO:0007669"/>
    <property type="project" value="UniProtKB-UniRule"/>
</dbReference>
<dbReference type="GO" id="GO:0008320">
    <property type="term" value="F:protein transmembrane transporter activity"/>
    <property type="evidence" value="ECO:0007669"/>
    <property type="project" value="UniProtKB-UniRule"/>
</dbReference>
<dbReference type="GO" id="GO:0043953">
    <property type="term" value="P:protein transport by the Tat complex"/>
    <property type="evidence" value="ECO:0007669"/>
    <property type="project" value="UniProtKB-UniRule"/>
</dbReference>
<dbReference type="Gene3D" id="1.20.5.3310">
    <property type="match status" value="1"/>
</dbReference>
<dbReference type="HAMAP" id="MF_00236">
    <property type="entry name" value="TatA_E"/>
    <property type="match status" value="1"/>
</dbReference>
<dbReference type="InterPro" id="IPR003369">
    <property type="entry name" value="TatA/B/E"/>
</dbReference>
<dbReference type="InterPro" id="IPR006312">
    <property type="entry name" value="TatA/E"/>
</dbReference>
<dbReference type="NCBIfam" id="NF011430">
    <property type="entry name" value="PRK14861.1"/>
    <property type="match status" value="1"/>
</dbReference>
<dbReference type="NCBIfam" id="TIGR01411">
    <property type="entry name" value="tatAE"/>
    <property type="match status" value="1"/>
</dbReference>
<dbReference type="PANTHER" id="PTHR42982">
    <property type="entry name" value="SEC-INDEPENDENT PROTEIN TRANSLOCASE PROTEIN TATA"/>
    <property type="match status" value="1"/>
</dbReference>
<dbReference type="PANTHER" id="PTHR42982:SF1">
    <property type="entry name" value="SEC-INDEPENDENT PROTEIN TRANSLOCASE PROTEIN TATA"/>
    <property type="match status" value="1"/>
</dbReference>
<dbReference type="Pfam" id="PF02416">
    <property type="entry name" value="TatA_B_E"/>
    <property type="match status" value="1"/>
</dbReference>
<dbReference type="PRINTS" id="PR01506">
    <property type="entry name" value="TATBPROTEIN"/>
</dbReference>
<keyword id="KW-1003">Cell membrane</keyword>
<keyword id="KW-0472">Membrane</keyword>
<keyword id="KW-0653">Protein transport</keyword>
<keyword id="KW-0811">Translocation</keyword>
<keyword id="KW-0812">Transmembrane</keyword>
<keyword id="KW-1133">Transmembrane helix</keyword>
<keyword id="KW-0813">Transport</keyword>
<reference key="1">
    <citation type="submission" date="2009-04" db="EMBL/GenBank/DDBJ databases">
        <title>Genome sequence of Bacillus anthracis A0248.</title>
        <authorList>
            <person name="Dodson R.J."/>
            <person name="Munk A.C."/>
            <person name="Bruce D."/>
            <person name="Detter C."/>
            <person name="Tapia R."/>
            <person name="Sutton G."/>
            <person name="Sims D."/>
            <person name="Brettin T."/>
        </authorList>
    </citation>
    <scope>NUCLEOTIDE SEQUENCE [LARGE SCALE GENOMIC DNA]</scope>
    <source>
        <strain>A0248</strain>
    </source>
</reference>
<protein>
    <recommendedName>
        <fullName evidence="1">Sec-independent protein translocase protein TatA</fullName>
    </recommendedName>
</protein>
<sequence>MFSNIGFPGLILILVAVLILFGPKKLPEIGKALGETLKEFKKSTKELTDDAFQEKEKKEKM</sequence>
<name>TATA_BACAA</name>